<accession>B6J5B9</accession>
<name>RL1_COXB1</name>
<evidence type="ECO:0000255" key="1">
    <source>
        <dbReference type="HAMAP-Rule" id="MF_01318"/>
    </source>
</evidence>
<evidence type="ECO:0000305" key="2"/>
<dbReference type="EMBL" id="CP001020">
    <property type="protein sequence ID" value="ACJ19703.1"/>
    <property type="molecule type" value="Genomic_DNA"/>
</dbReference>
<dbReference type="RefSeq" id="WP_005771615.1">
    <property type="nucleotide sequence ID" value="NC_011528.1"/>
</dbReference>
<dbReference type="SMR" id="B6J5B9"/>
<dbReference type="KEGG" id="cbc:CbuK_0420"/>
<dbReference type="HOGENOM" id="CLU_062853_0_0_6"/>
<dbReference type="GO" id="GO:0022625">
    <property type="term" value="C:cytosolic large ribosomal subunit"/>
    <property type="evidence" value="ECO:0007669"/>
    <property type="project" value="TreeGrafter"/>
</dbReference>
<dbReference type="GO" id="GO:0019843">
    <property type="term" value="F:rRNA binding"/>
    <property type="evidence" value="ECO:0007669"/>
    <property type="project" value="UniProtKB-UniRule"/>
</dbReference>
<dbReference type="GO" id="GO:0003735">
    <property type="term" value="F:structural constituent of ribosome"/>
    <property type="evidence" value="ECO:0007669"/>
    <property type="project" value="InterPro"/>
</dbReference>
<dbReference type="GO" id="GO:0000049">
    <property type="term" value="F:tRNA binding"/>
    <property type="evidence" value="ECO:0007669"/>
    <property type="project" value="UniProtKB-KW"/>
</dbReference>
<dbReference type="GO" id="GO:0006417">
    <property type="term" value="P:regulation of translation"/>
    <property type="evidence" value="ECO:0007669"/>
    <property type="project" value="UniProtKB-KW"/>
</dbReference>
<dbReference type="GO" id="GO:0006412">
    <property type="term" value="P:translation"/>
    <property type="evidence" value="ECO:0007669"/>
    <property type="project" value="UniProtKB-UniRule"/>
</dbReference>
<dbReference type="CDD" id="cd00403">
    <property type="entry name" value="Ribosomal_L1"/>
    <property type="match status" value="1"/>
</dbReference>
<dbReference type="FunFam" id="3.40.50.790:FF:000001">
    <property type="entry name" value="50S ribosomal protein L1"/>
    <property type="match status" value="1"/>
</dbReference>
<dbReference type="Gene3D" id="3.30.190.20">
    <property type="match status" value="1"/>
</dbReference>
<dbReference type="Gene3D" id="3.40.50.790">
    <property type="match status" value="1"/>
</dbReference>
<dbReference type="HAMAP" id="MF_01318_B">
    <property type="entry name" value="Ribosomal_uL1_B"/>
    <property type="match status" value="1"/>
</dbReference>
<dbReference type="InterPro" id="IPR005878">
    <property type="entry name" value="Ribosom_uL1_bac-type"/>
</dbReference>
<dbReference type="InterPro" id="IPR002143">
    <property type="entry name" value="Ribosomal_uL1"/>
</dbReference>
<dbReference type="InterPro" id="IPR023674">
    <property type="entry name" value="Ribosomal_uL1-like"/>
</dbReference>
<dbReference type="InterPro" id="IPR028364">
    <property type="entry name" value="Ribosomal_uL1/biogenesis"/>
</dbReference>
<dbReference type="InterPro" id="IPR016095">
    <property type="entry name" value="Ribosomal_uL1_3-a/b-sand"/>
</dbReference>
<dbReference type="InterPro" id="IPR023673">
    <property type="entry name" value="Ribosomal_uL1_CS"/>
</dbReference>
<dbReference type="NCBIfam" id="TIGR01169">
    <property type="entry name" value="rplA_bact"/>
    <property type="match status" value="1"/>
</dbReference>
<dbReference type="PANTHER" id="PTHR36427">
    <property type="entry name" value="54S RIBOSOMAL PROTEIN L1, MITOCHONDRIAL"/>
    <property type="match status" value="1"/>
</dbReference>
<dbReference type="PANTHER" id="PTHR36427:SF3">
    <property type="entry name" value="LARGE RIBOSOMAL SUBUNIT PROTEIN UL1M"/>
    <property type="match status" value="1"/>
</dbReference>
<dbReference type="Pfam" id="PF00687">
    <property type="entry name" value="Ribosomal_L1"/>
    <property type="match status" value="1"/>
</dbReference>
<dbReference type="PIRSF" id="PIRSF002155">
    <property type="entry name" value="Ribosomal_L1"/>
    <property type="match status" value="1"/>
</dbReference>
<dbReference type="SUPFAM" id="SSF56808">
    <property type="entry name" value="Ribosomal protein L1"/>
    <property type="match status" value="1"/>
</dbReference>
<dbReference type="PROSITE" id="PS01199">
    <property type="entry name" value="RIBOSOMAL_L1"/>
    <property type="match status" value="1"/>
</dbReference>
<reference key="1">
    <citation type="journal article" date="2009" name="Infect. Immun.">
        <title>Comparative genomics reveal extensive transposon-mediated genomic plasticity and diversity among potential effector proteins within the genus Coxiella.</title>
        <authorList>
            <person name="Beare P.A."/>
            <person name="Unsworth N."/>
            <person name="Andoh M."/>
            <person name="Voth D.E."/>
            <person name="Omsland A."/>
            <person name="Gilk S.D."/>
            <person name="Williams K.P."/>
            <person name="Sobral B.W."/>
            <person name="Kupko J.J. III"/>
            <person name="Porcella S.F."/>
            <person name="Samuel J.E."/>
            <person name="Heinzen R.A."/>
        </authorList>
    </citation>
    <scope>NUCLEOTIDE SEQUENCE [LARGE SCALE GENOMIC DNA]</scope>
    <source>
        <strain>CbuK_Q154</strain>
    </source>
</reference>
<proteinExistence type="inferred from homology"/>
<gene>
    <name evidence="1" type="primary">rplA</name>
    <name type="ordered locus">CbuK_0420</name>
</gene>
<feature type="chain" id="PRO_1000141384" description="Large ribosomal subunit protein uL1">
    <location>
        <begin position="1"/>
        <end position="232"/>
    </location>
</feature>
<comment type="function">
    <text evidence="1">Binds directly to 23S rRNA. The L1 stalk is quite mobile in the ribosome, and is involved in E site tRNA release.</text>
</comment>
<comment type="function">
    <text evidence="1">Protein L1 is also a translational repressor protein, it controls the translation of the L11 operon by binding to its mRNA.</text>
</comment>
<comment type="subunit">
    <text evidence="1">Part of the 50S ribosomal subunit.</text>
</comment>
<comment type="similarity">
    <text evidence="1">Belongs to the universal ribosomal protein uL1 family.</text>
</comment>
<protein>
    <recommendedName>
        <fullName evidence="1">Large ribosomal subunit protein uL1</fullName>
    </recommendedName>
    <alternativeName>
        <fullName evidence="2">50S ribosomal protein L1</fullName>
    </alternativeName>
</protein>
<organism>
    <name type="scientific">Coxiella burnetii (strain CbuK_Q154)</name>
    <name type="common">Coxiella burnetii (strain Q154)</name>
    <dbReference type="NCBI Taxonomy" id="434924"/>
    <lineage>
        <taxon>Bacteria</taxon>
        <taxon>Pseudomonadati</taxon>
        <taxon>Pseudomonadota</taxon>
        <taxon>Gammaproteobacteria</taxon>
        <taxon>Legionellales</taxon>
        <taxon>Coxiellaceae</taxon>
        <taxon>Coxiella</taxon>
    </lineage>
</organism>
<sequence>MAAKLTKKRKTLAEKVQRDKAYPLSEAIKLIKECAKAKFNESIDVAINLGIDSRKSDQAIRGATVLPHGSGRTVKVAVFAQGDNVEKAKAAGADIVGLDDLAERIQGGDIDFDVVIATPETMRVVGKLGQVLGPRGLMPNPKVGTVTTDVASAVKNAKQGQVRYRTDKNGIIHCTIGKVNFEEKALEENFLALLNDIKKAKPSAAKGTYLKKLTLSSTMGPGIAIDRTTVGA</sequence>
<keyword id="KW-0678">Repressor</keyword>
<keyword id="KW-0687">Ribonucleoprotein</keyword>
<keyword id="KW-0689">Ribosomal protein</keyword>
<keyword id="KW-0694">RNA-binding</keyword>
<keyword id="KW-0699">rRNA-binding</keyword>
<keyword id="KW-0810">Translation regulation</keyword>
<keyword id="KW-0820">tRNA-binding</keyword>